<name>RL24_STRPZ</name>
<feature type="chain" id="PRO_1000142048" description="Large ribosomal subunit protein uL24">
    <location>
        <begin position="1"/>
        <end position="101"/>
    </location>
</feature>
<proteinExistence type="inferred from homology"/>
<protein>
    <recommendedName>
        <fullName evidence="1">Large ribosomal subunit protein uL24</fullName>
    </recommendedName>
    <alternativeName>
        <fullName evidence="2">50S ribosomal protein L24</fullName>
    </alternativeName>
</protein>
<accession>B5XJ47</accession>
<sequence length="101" mass="10917">MFVKKGDKVRVIAGKDKGTEAVVLKALPKVNKVIVEGVGMIKKHQKPNTENPQGAIVEKEAPIHVSNVQVLDKNGVAGRVGYKVVDGKKVRYSKKSGEVLD</sequence>
<organism>
    <name type="scientific">Streptococcus pyogenes serotype M49 (strain NZ131)</name>
    <dbReference type="NCBI Taxonomy" id="471876"/>
    <lineage>
        <taxon>Bacteria</taxon>
        <taxon>Bacillati</taxon>
        <taxon>Bacillota</taxon>
        <taxon>Bacilli</taxon>
        <taxon>Lactobacillales</taxon>
        <taxon>Streptococcaceae</taxon>
        <taxon>Streptococcus</taxon>
    </lineage>
</organism>
<comment type="function">
    <text evidence="1">One of two assembly initiator proteins, it binds directly to the 5'-end of the 23S rRNA, where it nucleates assembly of the 50S subunit.</text>
</comment>
<comment type="function">
    <text evidence="1">One of the proteins that surrounds the polypeptide exit tunnel on the outside of the subunit.</text>
</comment>
<comment type="subunit">
    <text evidence="1">Part of the 50S ribosomal subunit.</text>
</comment>
<comment type="similarity">
    <text evidence="1">Belongs to the universal ribosomal protein uL24 family.</text>
</comment>
<reference key="1">
    <citation type="journal article" date="2008" name="J. Bacteriol.">
        <title>Genome sequence of a nephritogenic and highly transformable M49 strain of Streptococcus pyogenes.</title>
        <authorList>
            <person name="McShan W.M."/>
            <person name="Ferretti J.J."/>
            <person name="Karasawa T."/>
            <person name="Suvorov A.N."/>
            <person name="Lin S."/>
            <person name="Qin B."/>
            <person name="Jia H."/>
            <person name="Kenton S."/>
            <person name="Najar F."/>
            <person name="Wu H."/>
            <person name="Scott J."/>
            <person name="Roe B.A."/>
            <person name="Savic D.J."/>
        </authorList>
    </citation>
    <scope>NUCLEOTIDE SEQUENCE [LARGE SCALE GENOMIC DNA]</scope>
    <source>
        <strain>NZ131</strain>
    </source>
</reference>
<dbReference type="EMBL" id="CP000829">
    <property type="protein sequence ID" value="ACI60415.1"/>
    <property type="molecule type" value="Genomic_DNA"/>
</dbReference>
<dbReference type="SMR" id="B5XJ47"/>
<dbReference type="KEGG" id="soz:Spy49_0058"/>
<dbReference type="HOGENOM" id="CLU_093315_2_0_9"/>
<dbReference type="Proteomes" id="UP000001039">
    <property type="component" value="Chromosome"/>
</dbReference>
<dbReference type="GO" id="GO:1990904">
    <property type="term" value="C:ribonucleoprotein complex"/>
    <property type="evidence" value="ECO:0007669"/>
    <property type="project" value="UniProtKB-KW"/>
</dbReference>
<dbReference type="GO" id="GO:0005840">
    <property type="term" value="C:ribosome"/>
    <property type="evidence" value="ECO:0007669"/>
    <property type="project" value="UniProtKB-KW"/>
</dbReference>
<dbReference type="GO" id="GO:0019843">
    <property type="term" value="F:rRNA binding"/>
    <property type="evidence" value="ECO:0007669"/>
    <property type="project" value="UniProtKB-UniRule"/>
</dbReference>
<dbReference type="GO" id="GO:0003735">
    <property type="term" value="F:structural constituent of ribosome"/>
    <property type="evidence" value="ECO:0007669"/>
    <property type="project" value="InterPro"/>
</dbReference>
<dbReference type="GO" id="GO:0006412">
    <property type="term" value="P:translation"/>
    <property type="evidence" value="ECO:0007669"/>
    <property type="project" value="UniProtKB-UniRule"/>
</dbReference>
<dbReference type="CDD" id="cd06089">
    <property type="entry name" value="KOW_RPL26"/>
    <property type="match status" value="1"/>
</dbReference>
<dbReference type="FunFam" id="2.30.30.30:FF:000004">
    <property type="entry name" value="50S ribosomal protein L24"/>
    <property type="match status" value="1"/>
</dbReference>
<dbReference type="Gene3D" id="2.30.30.30">
    <property type="match status" value="1"/>
</dbReference>
<dbReference type="HAMAP" id="MF_01326_B">
    <property type="entry name" value="Ribosomal_uL24_B"/>
    <property type="match status" value="1"/>
</dbReference>
<dbReference type="InterPro" id="IPR005824">
    <property type="entry name" value="KOW"/>
</dbReference>
<dbReference type="InterPro" id="IPR014722">
    <property type="entry name" value="Rib_uL2_dom2"/>
</dbReference>
<dbReference type="InterPro" id="IPR003256">
    <property type="entry name" value="Ribosomal_uL24"/>
</dbReference>
<dbReference type="InterPro" id="IPR005825">
    <property type="entry name" value="Ribosomal_uL24_CS"/>
</dbReference>
<dbReference type="InterPro" id="IPR041988">
    <property type="entry name" value="Ribosomal_uL24_KOW"/>
</dbReference>
<dbReference type="InterPro" id="IPR008991">
    <property type="entry name" value="Translation_prot_SH3-like_sf"/>
</dbReference>
<dbReference type="NCBIfam" id="TIGR01079">
    <property type="entry name" value="rplX_bact"/>
    <property type="match status" value="1"/>
</dbReference>
<dbReference type="PANTHER" id="PTHR12903">
    <property type="entry name" value="MITOCHONDRIAL RIBOSOMAL PROTEIN L24"/>
    <property type="match status" value="1"/>
</dbReference>
<dbReference type="Pfam" id="PF00467">
    <property type="entry name" value="KOW"/>
    <property type="match status" value="1"/>
</dbReference>
<dbReference type="Pfam" id="PF17136">
    <property type="entry name" value="ribosomal_L24"/>
    <property type="match status" value="1"/>
</dbReference>
<dbReference type="SMART" id="SM00739">
    <property type="entry name" value="KOW"/>
    <property type="match status" value="1"/>
</dbReference>
<dbReference type="SUPFAM" id="SSF50104">
    <property type="entry name" value="Translation proteins SH3-like domain"/>
    <property type="match status" value="1"/>
</dbReference>
<dbReference type="PROSITE" id="PS01108">
    <property type="entry name" value="RIBOSOMAL_L24"/>
    <property type="match status" value="1"/>
</dbReference>
<evidence type="ECO:0000255" key="1">
    <source>
        <dbReference type="HAMAP-Rule" id="MF_01326"/>
    </source>
</evidence>
<evidence type="ECO:0000305" key="2"/>
<keyword id="KW-0687">Ribonucleoprotein</keyword>
<keyword id="KW-0689">Ribosomal protein</keyword>
<keyword id="KW-0694">RNA-binding</keyword>
<keyword id="KW-0699">rRNA-binding</keyword>
<gene>
    <name evidence="1" type="primary">rplX</name>
    <name type="ordered locus">Spy49_0058</name>
</gene>